<protein>
    <recommendedName>
        <fullName>Proline-rich protein 35</fullName>
    </recommendedName>
    <alternativeName>
        <fullName>Uncharacterized protein RJD1</fullName>
    </alternativeName>
</protein>
<organism>
    <name type="scientific">Homo sapiens</name>
    <name type="common">Human</name>
    <dbReference type="NCBI Taxonomy" id="9606"/>
    <lineage>
        <taxon>Eukaryota</taxon>
        <taxon>Metazoa</taxon>
        <taxon>Chordata</taxon>
        <taxon>Craniata</taxon>
        <taxon>Vertebrata</taxon>
        <taxon>Euteleostomi</taxon>
        <taxon>Mammalia</taxon>
        <taxon>Eutheria</taxon>
        <taxon>Euarchontoglires</taxon>
        <taxon>Primates</taxon>
        <taxon>Haplorrhini</taxon>
        <taxon>Catarrhini</taxon>
        <taxon>Hominidae</taxon>
        <taxon>Homo</taxon>
    </lineage>
</organism>
<name>PRR35_HUMAN</name>
<accession>P0CG20</accession>
<accession>B8ZZ27</accession>
<accession>Q8N233</accession>
<accession>Q96AX3</accession>
<accession>Q96S23</accession>
<comment type="interaction">
    <interactant intactId="EBI-11986293">
        <id>P0CG20</id>
    </interactant>
    <interactant intactId="EBI-12318443">
        <id>Q8NFV4-4</id>
        <label>ABHD11</label>
    </interactant>
    <organismsDiffer>false</organismsDiffer>
    <experiments>3</experiments>
</comment>
<comment type="interaction">
    <interactant intactId="EBI-11986293">
        <id>P0CG20</id>
    </interactant>
    <interactant intactId="EBI-11976299">
        <id>Q5BKX5-3</id>
        <label>ACTMAP</label>
    </interactant>
    <organismsDiffer>false</organismsDiffer>
    <experiments>3</experiments>
</comment>
<comment type="interaction">
    <interactant intactId="EBI-11986293">
        <id>P0CG20</id>
    </interactant>
    <interactant intactId="EBI-742064">
        <id>Q03154</id>
        <label>ACY1</label>
    </interactant>
    <organismsDiffer>false</organismsDiffer>
    <experiments>3</experiments>
</comment>
<comment type="interaction">
    <interactant intactId="EBI-11986293">
        <id>P0CG20</id>
    </interactant>
    <interactant intactId="EBI-741261">
        <id>Q8NEU8</id>
        <label>APPL2</label>
    </interactant>
    <organismsDiffer>false</organismsDiffer>
    <experiments>3</experiments>
</comment>
<comment type="interaction">
    <interactant intactId="EBI-11986293">
        <id>P0CG20</id>
    </interactant>
    <interactant intactId="EBI-6425121">
        <id>Q96C12</id>
        <label>ARMC5</label>
    </interactant>
    <organismsDiffer>false</organismsDiffer>
    <experiments>3</experiments>
</comment>
<comment type="interaction">
    <interactant intactId="EBI-11986293">
        <id>P0CG20</id>
    </interactant>
    <interactant intactId="EBI-12809012">
        <id>Q8WXK1</id>
        <label>ASB15</label>
    </interactant>
    <organismsDiffer>false</organismsDiffer>
    <experiments>3</experiments>
</comment>
<comment type="interaction">
    <interactant intactId="EBI-11986293">
        <id>P0CG20</id>
    </interactant>
    <interactant intactId="EBI-742722">
        <id>Q9BUH8</id>
        <label>BEGAIN</label>
    </interactant>
    <organismsDiffer>false</organismsDiffer>
    <experiments>3</experiments>
</comment>
<comment type="interaction">
    <interactant intactId="EBI-11986293">
        <id>P0CG20</id>
    </interactant>
    <interactant intactId="EBI-517623">
        <id>Q96CA5</id>
        <label>BIRC7</label>
    </interactant>
    <organismsDiffer>false</organismsDiffer>
    <experiments>3</experiments>
</comment>
<comment type="interaction">
    <interactant intactId="EBI-11986293">
        <id>P0CG20</id>
    </interactant>
    <interactant intactId="EBI-953896">
        <id>Q9NP55</id>
        <label>BPIFA1</label>
    </interactant>
    <organismsDiffer>false</organismsDiffer>
    <experiments>3</experiments>
</comment>
<comment type="interaction">
    <interactant intactId="EBI-11986293">
        <id>P0CG20</id>
    </interactant>
    <interactant intactId="EBI-3866279">
        <id>Q9BWT7</id>
        <label>CARD10</label>
    </interactant>
    <organismsDiffer>false</organismsDiffer>
    <experiments>3</experiments>
</comment>
<comment type="interaction">
    <interactant intactId="EBI-11986293">
        <id>P0CG20</id>
    </interactant>
    <interactant intactId="EBI-718615">
        <id>Q9H5F2</id>
        <label>CFAP68</label>
    </interactant>
    <organismsDiffer>false</organismsDiffer>
    <experiments>3</experiments>
</comment>
<comment type="interaction">
    <interactant intactId="EBI-11986293">
        <id>P0CG20</id>
    </interactant>
    <interactant intactId="EBI-743033">
        <id>Q9NZN8</id>
        <label>CNOT2</label>
    </interactant>
    <organismsDiffer>false</organismsDiffer>
    <experiments>3</experiments>
</comment>
<comment type="interaction">
    <interactant intactId="EBI-11986293">
        <id>P0CG20</id>
    </interactant>
    <interactant intactId="EBI-748171">
        <id>O43186</id>
        <label>CRX</label>
    </interactant>
    <organismsDiffer>false</organismsDiffer>
    <experiments>3</experiments>
</comment>
<comment type="interaction">
    <interactant intactId="EBI-11986293">
        <id>P0CG20</id>
    </interactant>
    <interactant intactId="EBI-3867333">
        <id>A8MQ03</id>
        <label>CYSRT1</label>
    </interactant>
    <organismsDiffer>false</organismsDiffer>
    <experiments>3</experiments>
</comment>
<comment type="interaction">
    <interactant intactId="EBI-11986293">
        <id>P0CG20</id>
    </interactant>
    <interactant intactId="EBI-742102">
        <id>Q8IYI6</id>
        <label>EXOC8</label>
    </interactant>
    <organismsDiffer>false</organismsDiffer>
    <experiments>3</experiments>
</comment>
<comment type="interaction">
    <interactant intactId="EBI-11986293">
        <id>P0CG20</id>
    </interactant>
    <interactant intactId="EBI-12193763">
        <id>A1KXE4-2</id>
        <label>FAM168B</label>
    </interactant>
    <organismsDiffer>false</organismsDiffer>
    <experiments>3</experiments>
</comment>
<comment type="interaction">
    <interactant intactId="EBI-11986293">
        <id>P0CG20</id>
    </interactant>
    <interactant intactId="EBI-741101">
        <id>Q13643</id>
        <label>FHL3</label>
    </interactant>
    <organismsDiffer>false</organismsDiffer>
    <experiments>3</experiments>
</comment>
<comment type="interaction">
    <interactant intactId="EBI-11986293">
        <id>P0CG20</id>
    </interactant>
    <interactant intactId="EBI-12023420">
        <id>O94915-2</id>
        <label>FRYL</label>
    </interactant>
    <organismsDiffer>false</organismsDiffer>
    <experiments>3</experiments>
</comment>
<comment type="interaction">
    <interactant intactId="EBI-11986293">
        <id>P0CG20</id>
    </interactant>
    <interactant intactId="EBI-947774">
        <id>O75420</id>
        <label>GIGYF1</label>
    </interactant>
    <organismsDiffer>false</organismsDiffer>
    <experiments>3</experiments>
</comment>
<comment type="interaction">
    <interactant intactId="EBI-11986293">
        <id>P0CG20</id>
    </interactant>
    <interactant intactId="EBI-740418">
        <id>O75791</id>
        <label>GRAP2</label>
    </interactant>
    <organismsDiffer>false</organismsDiffer>
    <experiments>3</experiments>
</comment>
<comment type="interaction">
    <interactant intactId="EBI-11986293">
        <id>P0CG20</id>
    </interactant>
    <interactant intactId="EBI-748420">
        <id>Q9NSC5</id>
        <label>HOMER3</label>
    </interactant>
    <organismsDiffer>false</organismsDiffer>
    <experiments>3</experiments>
</comment>
<comment type="interaction">
    <interactant intactId="EBI-11986293">
        <id>P0CG20</id>
    </interactant>
    <interactant intactId="EBI-10961706">
        <id>Q96ED9-2</id>
        <label>HOOK2</label>
    </interactant>
    <organismsDiffer>false</organismsDiffer>
    <experiments>3</experiments>
</comment>
<comment type="interaction">
    <interactant intactId="EBI-11986293">
        <id>P0CG20</id>
    </interactant>
    <interactant intactId="EBI-12197079">
        <id>P84074</id>
        <label>HPCA</label>
    </interactant>
    <organismsDiffer>false</organismsDiffer>
    <experiments>3</experiments>
</comment>
<comment type="interaction">
    <interactant intactId="EBI-11986293">
        <id>P0CG20</id>
    </interactant>
    <interactant intactId="EBI-739395">
        <id>Q16082</id>
        <label>HSPB2</label>
    </interactant>
    <organismsDiffer>false</organismsDiffer>
    <experiments>3</experiments>
</comment>
<comment type="interaction">
    <interactant intactId="EBI-11986293">
        <id>P0CG20</id>
    </interactant>
    <interactant intactId="EBI-12081118">
        <id>Q1MX18</id>
        <label>INSC</label>
    </interactant>
    <organismsDiffer>false</organismsDiffer>
    <experiments>3</experiments>
</comment>
<comment type="interaction">
    <interactant intactId="EBI-11986293">
        <id>P0CG20</id>
    </interactant>
    <interactant intactId="EBI-748258">
        <id>Q5TA45</id>
        <label>INTS11</label>
    </interactant>
    <organismsDiffer>false</organismsDiffer>
    <experiments>3</experiments>
</comment>
<comment type="interaction">
    <interactant intactId="EBI-11986293">
        <id>P0CG20</id>
    </interactant>
    <interactant intactId="EBI-702484">
        <id>P14923</id>
        <label>JUP</label>
    </interactant>
    <organismsDiffer>false</organismsDiffer>
    <experiments>3</experiments>
</comment>
<comment type="interaction">
    <interactant intactId="EBI-11986293">
        <id>P0CG20</id>
    </interactant>
    <interactant intactId="EBI-724915">
        <id>Q53HC5</id>
        <label>KLHL26</label>
    </interactant>
    <organismsDiffer>false</organismsDiffer>
    <experiments>3</experiments>
</comment>
<comment type="interaction">
    <interactant intactId="EBI-11986293">
        <id>P0CG20</id>
    </interactant>
    <interactant intactId="EBI-948001">
        <id>Q15323</id>
        <label>KRT31</label>
    </interactant>
    <organismsDiffer>false</organismsDiffer>
    <experiments>3</experiments>
</comment>
<comment type="interaction">
    <interactant intactId="EBI-11986293">
        <id>P0CG20</id>
    </interactant>
    <interactant intactId="EBI-1047093">
        <id>O76011</id>
        <label>KRT34</label>
    </interactant>
    <organismsDiffer>false</organismsDiffer>
    <experiments>5</experiments>
</comment>
<comment type="interaction">
    <interactant intactId="EBI-11986293">
        <id>P0CG20</id>
    </interactant>
    <interactant intactId="EBI-1058674">
        <id>Q92764</id>
        <label>KRT35</label>
    </interactant>
    <organismsDiffer>false</organismsDiffer>
    <experiments>3</experiments>
</comment>
<comment type="interaction">
    <interactant intactId="EBI-11986293">
        <id>P0CG20</id>
    </interactant>
    <interactant intactId="EBI-10172290">
        <id>P60409</id>
        <label>KRTAP10-7</label>
    </interactant>
    <organismsDiffer>false</organismsDiffer>
    <experiments>3</experiments>
</comment>
<comment type="interaction">
    <interactant intactId="EBI-11986293">
        <id>P0CG20</id>
    </interactant>
    <interactant intactId="EBI-10210845">
        <id>P59990</id>
        <label>KRTAP12-1</label>
    </interactant>
    <organismsDiffer>false</organismsDiffer>
    <experiments>3</experiments>
</comment>
<comment type="interaction">
    <interactant intactId="EBI-11986293">
        <id>P0CG20</id>
    </interactant>
    <interactant intactId="EBI-3957672">
        <id>Q6PEX3</id>
        <label>KRTAP26-1</label>
    </interactant>
    <organismsDiffer>false</organismsDiffer>
    <experiments>3</experiments>
</comment>
<comment type="interaction">
    <interactant intactId="EBI-11986293">
        <id>P0CG20</id>
    </interactant>
    <interactant intactId="EBI-12111050">
        <id>Q3LI64</id>
        <label>KRTAP6-1</label>
    </interactant>
    <organismsDiffer>false</organismsDiffer>
    <experiments>3</experiments>
</comment>
<comment type="interaction">
    <interactant intactId="EBI-11986293">
        <id>P0CG20</id>
    </interactant>
    <interactant intactId="EBI-11962084">
        <id>Q3LI66</id>
        <label>KRTAP6-2</label>
    </interactant>
    <organismsDiffer>false</organismsDiffer>
    <experiments>5</experiments>
</comment>
<comment type="interaction">
    <interactant intactId="EBI-11986293">
        <id>P0CG20</id>
    </interactant>
    <interactant intactId="EBI-22311199">
        <id>Q3LI67</id>
        <label>KRTAP6-3</label>
    </interactant>
    <organismsDiffer>false</organismsDiffer>
    <experiments>3</experiments>
</comment>
<comment type="interaction">
    <interactant intactId="EBI-11986293">
        <id>P0CG20</id>
    </interactant>
    <interactant intactId="EBI-10261141">
        <id>Q8IUC2</id>
        <label>KRTAP8-1</label>
    </interactant>
    <organismsDiffer>false</organismsDiffer>
    <experiments>3</experiments>
</comment>
<comment type="interaction">
    <interactant intactId="EBI-11986293">
        <id>P0CG20</id>
    </interactant>
    <interactant intactId="EBI-9088686">
        <id>Q14847-2</id>
        <label>LASP1</label>
    </interactant>
    <organismsDiffer>false</organismsDiffer>
    <experiments>3</experiments>
</comment>
<comment type="interaction">
    <interactant intactId="EBI-11986293">
        <id>P0CG20</id>
    </interactant>
    <interactant intactId="EBI-2341787">
        <id>Q17RB8</id>
        <label>LONRF1</label>
    </interactant>
    <organismsDiffer>false</organismsDiffer>
    <experiments>3</experiments>
</comment>
<comment type="interaction">
    <interactant intactId="EBI-11986293">
        <id>P0CG20</id>
    </interactant>
    <interactant intactId="EBI-741037">
        <id>Q9BRK4</id>
        <label>LZTS2</label>
    </interactant>
    <organismsDiffer>false</organismsDiffer>
    <experiments>3</experiments>
</comment>
<comment type="interaction">
    <interactant intactId="EBI-11986293">
        <id>P0CG20</id>
    </interactant>
    <interactant intactId="EBI-716006">
        <id>Q9Y5V3</id>
        <label>MAGED1</label>
    </interactant>
    <organismsDiffer>false</organismsDiffer>
    <experiments>3</experiments>
</comment>
<comment type="interaction">
    <interactant intactId="EBI-11986293">
        <id>P0CG20</id>
    </interactant>
    <interactant intactId="EBI-11987923">
        <id>P59942</id>
        <label>MCCD1</label>
    </interactant>
    <organismsDiffer>false</organismsDiffer>
    <experiments>3</experiments>
</comment>
<comment type="interaction">
    <interactant intactId="EBI-11986293">
        <id>P0CG20</id>
    </interactant>
    <interactant intactId="EBI-2340269">
        <id>Q13064</id>
        <label>MKRN3</label>
    </interactant>
    <organismsDiffer>false</organismsDiffer>
    <experiments>3</experiments>
</comment>
<comment type="interaction">
    <interactant intactId="EBI-11986293">
        <id>P0CG20</id>
    </interactant>
    <interactant intactId="EBI-11599933">
        <id>Q4VC12</id>
        <label>MSS51</label>
    </interactant>
    <organismsDiffer>false</organismsDiffer>
    <experiments>3</experiments>
</comment>
<comment type="interaction">
    <interactant intactId="EBI-11986293">
        <id>P0CG20</id>
    </interactant>
    <interactant intactId="EBI-11522433">
        <id>Q5JR59-3</id>
        <label>MTUS2</label>
    </interactant>
    <organismsDiffer>false</organismsDiffer>
    <experiments>3</experiments>
</comment>
<comment type="interaction">
    <interactant intactId="EBI-11986293">
        <id>P0CG20</id>
    </interactant>
    <interactant intactId="EBI-2512055">
        <id>O15049</id>
        <label>N4BP3</label>
    </interactant>
    <organismsDiffer>false</organismsDiffer>
    <experiments>3</experiments>
</comment>
<comment type="interaction">
    <interactant intactId="EBI-11986293">
        <id>P0CG20</id>
    </interactant>
    <interactant intactId="EBI-22310682">
        <id>P0DPK4</id>
        <label>NOTCH2NLC</label>
    </interactant>
    <organismsDiffer>false</organismsDiffer>
    <experiments>3</experiments>
</comment>
<comment type="interaction">
    <interactant intactId="EBI-11986293">
        <id>P0CG20</id>
    </interactant>
    <interactant intactId="EBI-536879">
        <id>O43482</id>
        <label>OIP5</label>
    </interactant>
    <organismsDiffer>false</organismsDiffer>
    <experiments>3</experiments>
</comment>
<comment type="interaction">
    <interactant intactId="EBI-11986293">
        <id>P0CG20</id>
    </interactant>
    <interactant intactId="EBI-12813389">
        <id>Q8TDS5</id>
        <label>OXER1</label>
    </interactant>
    <organismsDiffer>false</organismsDiffer>
    <experiments>3</experiments>
</comment>
<comment type="interaction">
    <interactant intactId="EBI-11986293">
        <id>P0CG20</id>
    </interactant>
    <interactant intactId="EBI-357275">
        <id>Q99471</id>
        <label>PFDN5</label>
    </interactant>
    <organismsDiffer>false</organismsDiffer>
    <experiments>3</experiments>
</comment>
<comment type="interaction">
    <interactant intactId="EBI-11986293">
        <id>P0CG20</id>
    </interactant>
    <interactant intactId="EBI-2876622">
        <id>Q9UPG8</id>
        <label>PLAGL2</label>
    </interactant>
    <organismsDiffer>false</organismsDiffer>
    <experiments>3</experiments>
</comment>
<comment type="interaction">
    <interactant intactId="EBI-11986293">
        <id>P0CG20</id>
    </interactant>
    <interactant intactId="EBI-2557649">
        <id>Q9Y3C6</id>
        <label>PPIL1</label>
    </interactant>
    <organismsDiffer>false</organismsDiffer>
    <experiments>3</experiments>
</comment>
<comment type="interaction">
    <interactant intactId="EBI-11986293">
        <id>P0CG20</id>
    </interactant>
    <interactant intactId="EBI-1105153">
        <id>Q96KQ4</id>
        <label>PPP1R13B</label>
    </interactant>
    <organismsDiffer>false</organismsDiffer>
    <experiments>3</experiments>
</comment>
<comment type="interaction">
    <interactant intactId="EBI-11986293">
        <id>P0CG20</id>
    </interactant>
    <interactant intactId="EBI-12754095">
        <id>P86480</id>
        <label>PRR20D</label>
    </interactant>
    <organismsDiffer>false</organismsDiffer>
    <experiments>3</experiments>
</comment>
<comment type="interaction">
    <interactant intactId="EBI-11986293">
        <id>P0CG20</id>
    </interactant>
    <interactant intactId="EBI-1050964">
        <id>O43586</id>
        <label>PSTPIP1</label>
    </interactant>
    <organismsDiffer>false</organismsDiffer>
    <experiments>3</experiments>
</comment>
<comment type="interaction">
    <interactant intactId="EBI-11986293">
        <id>P0CG20</id>
    </interactant>
    <interactant intactId="EBI-740343">
        <id>Q93062-3</id>
        <label>RBPMS</label>
    </interactant>
    <organismsDiffer>false</organismsDiffer>
    <experiments>3</experiments>
</comment>
<comment type="interaction">
    <interactant intactId="EBI-11986293">
        <id>P0CG20</id>
    </interactant>
    <interactant intactId="EBI-6257312">
        <id>Q9BVN2</id>
        <label>RUSC1</label>
    </interactant>
    <organismsDiffer>false</organismsDiffer>
    <experiments>3</experiments>
</comment>
<comment type="interaction">
    <interactant intactId="EBI-11986293">
        <id>P0CG20</id>
    </interactant>
    <interactant intactId="EBI-12275818">
        <id>Q53HV7-2</id>
        <label>SMUG1</label>
    </interactant>
    <organismsDiffer>false</organismsDiffer>
    <experiments>3</experiments>
</comment>
<comment type="interaction">
    <interactant intactId="EBI-11986293">
        <id>P0CG20</id>
    </interactant>
    <interactant intactId="EBI-11959123">
        <id>Q99932-2</id>
        <label>SPAG8</label>
    </interactant>
    <organismsDiffer>false</organismsDiffer>
    <experiments>3</experiments>
</comment>
<comment type="interaction">
    <interactant intactId="EBI-11986293">
        <id>P0CG20</id>
    </interactant>
    <interactant intactId="EBI-12096770">
        <id>O60806</id>
        <label>TBX19</label>
    </interactant>
    <organismsDiffer>false</organismsDiffer>
    <experiments>3</experiments>
</comment>
<comment type="interaction">
    <interactant intactId="EBI-11986293">
        <id>P0CG20</id>
    </interactant>
    <interactant intactId="EBI-11741437">
        <id>Q08117-2</id>
        <label>TLE5</label>
    </interactant>
    <organismsDiffer>false</organismsDiffer>
    <experiments>5</experiments>
</comment>
<comment type="interaction">
    <interactant intactId="EBI-11986293">
        <id>P0CG20</id>
    </interactant>
    <interactant intactId="EBI-719493">
        <id>P14373</id>
        <label>TRIM27</label>
    </interactant>
    <organismsDiffer>false</organismsDiffer>
    <experiments>3</experiments>
</comment>
<comment type="interaction">
    <interactant intactId="EBI-11986293">
        <id>P0CG20</id>
    </interactant>
    <interactant intactId="EBI-2130429">
        <id>Q9BYV2</id>
        <label>TRIM54</label>
    </interactant>
    <organismsDiffer>false</organismsDiffer>
    <experiments>3</experiments>
</comment>
<comment type="interaction">
    <interactant intactId="EBI-11986293">
        <id>P0CG20</id>
    </interactant>
    <interactant intactId="EBI-10259086">
        <id>Q86UV6-2</id>
        <label>TRIM74</label>
    </interactant>
    <organismsDiffer>false</organismsDiffer>
    <experiments>3</experiments>
</comment>
<comment type="interaction">
    <interactant intactId="EBI-11986293">
        <id>P0CG20</id>
    </interactant>
    <interactant intactId="EBI-948354">
        <id>Q6DKK2</id>
        <label>TTC19</label>
    </interactant>
    <organismsDiffer>false</organismsDiffer>
    <experiments>3</experiments>
</comment>
<comment type="interaction">
    <interactant intactId="EBI-11986293">
        <id>P0CG20</id>
    </interactant>
    <interactant intactId="EBI-923010">
        <id>Q14166</id>
        <label>TTLL12</label>
    </interactant>
    <organismsDiffer>false</organismsDiffer>
    <experiments>3</experiments>
</comment>
<comment type="interaction">
    <interactant intactId="EBI-11986293">
        <id>P0CG20</id>
    </interactant>
    <interactant intactId="EBI-1380492">
        <id>Q8TF42</id>
        <label>UBASH3B</label>
    </interactant>
    <organismsDiffer>false</organismsDiffer>
    <experiments>3</experiments>
</comment>
<comment type="interaction">
    <interactant intactId="EBI-11986293">
        <id>P0CG20</id>
    </interactant>
    <interactant intactId="EBI-11524408">
        <id>Q5T124-6</id>
        <label>UBXN11</label>
    </interactant>
    <organismsDiffer>false</organismsDiffer>
    <experiments>3</experiments>
</comment>
<comment type="interaction">
    <interactant intactId="EBI-11986293">
        <id>P0CG20</id>
    </interactant>
    <interactant intactId="EBI-11975223">
        <id>Q70EL1-9</id>
        <label>USP54</label>
    </interactant>
    <organismsDiffer>false</organismsDiffer>
    <experiments>3</experiments>
</comment>
<comment type="interaction">
    <interactant intactId="EBI-11986293">
        <id>P0CG20</id>
    </interactant>
    <interactant intactId="EBI-12030590">
        <id>Q9H0C1</id>
        <label>ZMYND12</label>
    </interactant>
    <organismsDiffer>false</organismsDiffer>
    <experiments>3</experiments>
</comment>
<comment type="interaction">
    <interactant intactId="EBI-11986293">
        <id>P0CG20</id>
    </interactant>
    <interactant intactId="EBI-625509">
        <id>Q8N720</id>
        <label>ZNF655</label>
    </interactant>
    <organismsDiffer>false</organismsDiffer>
    <experiments>3</experiments>
</comment>
<comment type="sequence caution" evidence="2">
    <conflict type="erroneous gene model prediction">
        <sequence resource="EMBL-CDS" id="AAK61234"/>
    </conflict>
</comment>
<evidence type="ECO:0000256" key="1">
    <source>
        <dbReference type="SAM" id="MobiDB-lite"/>
    </source>
</evidence>
<evidence type="ECO:0000305" key="2"/>
<proteinExistence type="evidence at protein level"/>
<keyword id="KW-1267">Proteomics identification</keyword>
<keyword id="KW-1185">Reference proteome</keyword>
<reference key="1">
    <citation type="journal article" date="2001" name="Hum. Mol. Genet.">
        <title>Sequence, structure and pathology of the fully annotated terminal 2 Mb of the short arm of human chromosome 16.</title>
        <authorList>
            <person name="Daniels R.J."/>
            <person name="Peden J.F."/>
            <person name="Lloyd C."/>
            <person name="Horsley S.W."/>
            <person name="Clark K."/>
            <person name="Tufarelli C."/>
            <person name="Kearney L."/>
            <person name="Buckle V.J."/>
            <person name="Doggett N.A."/>
            <person name="Flint J."/>
            <person name="Higgs D.R."/>
        </authorList>
    </citation>
    <scope>NUCLEOTIDE SEQUENCE [LARGE SCALE GENOMIC DNA]</scope>
</reference>
<reference key="2">
    <citation type="journal article" date="2004" name="Nature">
        <title>The sequence and analysis of duplication-rich human chromosome 16.</title>
        <authorList>
            <person name="Martin J."/>
            <person name="Han C."/>
            <person name="Gordon L.A."/>
            <person name="Terry A."/>
            <person name="Prabhakar S."/>
            <person name="She X."/>
            <person name="Xie G."/>
            <person name="Hellsten U."/>
            <person name="Chan Y.M."/>
            <person name="Altherr M."/>
            <person name="Couronne O."/>
            <person name="Aerts A."/>
            <person name="Bajorek E."/>
            <person name="Black S."/>
            <person name="Blumer H."/>
            <person name="Branscomb E."/>
            <person name="Brown N.C."/>
            <person name="Bruno W.J."/>
            <person name="Buckingham J.M."/>
            <person name="Callen D.F."/>
            <person name="Campbell C.S."/>
            <person name="Campbell M.L."/>
            <person name="Campbell E.W."/>
            <person name="Caoile C."/>
            <person name="Challacombe J.F."/>
            <person name="Chasteen L.A."/>
            <person name="Chertkov O."/>
            <person name="Chi H.C."/>
            <person name="Christensen M."/>
            <person name="Clark L.M."/>
            <person name="Cohn J.D."/>
            <person name="Denys M."/>
            <person name="Detter J.C."/>
            <person name="Dickson M."/>
            <person name="Dimitrijevic-Bussod M."/>
            <person name="Escobar J."/>
            <person name="Fawcett J.J."/>
            <person name="Flowers D."/>
            <person name="Fotopulos D."/>
            <person name="Glavina T."/>
            <person name="Gomez M."/>
            <person name="Gonzales E."/>
            <person name="Goodstein D."/>
            <person name="Goodwin L.A."/>
            <person name="Grady D.L."/>
            <person name="Grigoriev I."/>
            <person name="Groza M."/>
            <person name="Hammon N."/>
            <person name="Hawkins T."/>
            <person name="Haydu L."/>
            <person name="Hildebrand C.E."/>
            <person name="Huang W."/>
            <person name="Israni S."/>
            <person name="Jett J."/>
            <person name="Jewett P.B."/>
            <person name="Kadner K."/>
            <person name="Kimball H."/>
            <person name="Kobayashi A."/>
            <person name="Krawczyk M.-C."/>
            <person name="Leyba T."/>
            <person name="Longmire J.L."/>
            <person name="Lopez F."/>
            <person name="Lou Y."/>
            <person name="Lowry S."/>
            <person name="Ludeman T."/>
            <person name="Manohar C.F."/>
            <person name="Mark G.A."/>
            <person name="McMurray K.L."/>
            <person name="Meincke L.J."/>
            <person name="Morgan J."/>
            <person name="Moyzis R.K."/>
            <person name="Mundt M.O."/>
            <person name="Munk A.C."/>
            <person name="Nandkeshwar R.D."/>
            <person name="Pitluck S."/>
            <person name="Pollard M."/>
            <person name="Predki P."/>
            <person name="Parson-Quintana B."/>
            <person name="Ramirez L."/>
            <person name="Rash S."/>
            <person name="Retterer J."/>
            <person name="Ricke D.O."/>
            <person name="Robinson D.L."/>
            <person name="Rodriguez A."/>
            <person name="Salamov A."/>
            <person name="Saunders E.H."/>
            <person name="Scott D."/>
            <person name="Shough T."/>
            <person name="Stallings R.L."/>
            <person name="Stalvey M."/>
            <person name="Sutherland R.D."/>
            <person name="Tapia R."/>
            <person name="Tesmer J.G."/>
            <person name="Thayer N."/>
            <person name="Thompson L.S."/>
            <person name="Tice H."/>
            <person name="Torney D.C."/>
            <person name="Tran-Gyamfi M."/>
            <person name="Tsai M."/>
            <person name="Ulanovsky L.E."/>
            <person name="Ustaszewska A."/>
            <person name="Vo N."/>
            <person name="White P.S."/>
            <person name="Williams A.L."/>
            <person name="Wills P.L."/>
            <person name="Wu J.-R."/>
            <person name="Wu K."/>
            <person name="Yang J."/>
            <person name="DeJong P."/>
            <person name="Bruce D."/>
            <person name="Doggett N.A."/>
            <person name="Deaven L."/>
            <person name="Schmutz J."/>
            <person name="Grimwood J."/>
            <person name="Richardson P."/>
            <person name="Rokhsar D.S."/>
            <person name="Eichler E.E."/>
            <person name="Gilna P."/>
            <person name="Lucas S.M."/>
            <person name="Myers R.M."/>
            <person name="Rubin E.M."/>
            <person name="Pennacchio L.A."/>
        </authorList>
    </citation>
    <scope>NUCLEOTIDE SEQUENCE [LARGE SCALE GENOMIC DNA]</scope>
</reference>
<reference key="3">
    <citation type="submission" date="2005-09" db="EMBL/GenBank/DDBJ databases">
        <authorList>
            <person name="Mural R.J."/>
            <person name="Istrail S."/>
            <person name="Sutton G.G."/>
            <person name="Florea L."/>
            <person name="Halpern A.L."/>
            <person name="Mobarry C.M."/>
            <person name="Lippert R."/>
            <person name="Walenz B."/>
            <person name="Shatkay H."/>
            <person name="Dew I."/>
            <person name="Miller J.R."/>
            <person name="Flanigan M.J."/>
            <person name="Edwards N.J."/>
            <person name="Bolanos R."/>
            <person name="Fasulo D."/>
            <person name="Halldorsson B.V."/>
            <person name="Hannenhalli S."/>
            <person name="Turner R."/>
            <person name="Yooseph S."/>
            <person name="Lu F."/>
            <person name="Nusskern D.R."/>
            <person name="Shue B.C."/>
            <person name="Zheng X.H."/>
            <person name="Zhong F."/>
            <person name="Delcher A.L."/>
            <person name="Huson D.H."/>
            <person name="Kravitz S.A."/>
            <person name="Mouchard L."/>
            <person name="Reinert K."/>
            <person name="Remington K.A."/>
            <person name="Clark A.G."/>
            <person name="Waterman M.S."/>
            <person name="Eichler E.E."/>
            <person name="Adams M.D."/>
            <person name="Hunkapiller M.W."/>
            <person name="Myers E.W."/>
            <person name="Venter J.C."/>
        </authorList>
    </citation>
    <scope>NUCLEOTIDE SEQUENCE [LARGE SCALE GENOMIC DNA]</scope>
</reference>
<reference key="4">
    <citation type="journal article" date="2004" name="Genome Res.">
        <title>The status, quality, and expansion of the NIH full-length cDNA project: the Mammalian Gene Collection (MGC).</title>
        <authorList>
            <consortium name="The MGC Project Team"/>
        </authorList>
    </citation>
    <scope>NUCLEOTIDE SEQUENCE [LARGE SCALE MRNA]</scope>
    <source>
        <tissue>Eye</tissue>
    </source>
</reference>
<sequence>MSREAGSCRVGTGARARSRKPKKPHYIPRPWGKPYNYKCFQCPFTCLEKSHLYNHMKYSLCKDSLSLLLDSPDWACRRGSTTPRPHAPTPDRPGESDPGRQPQGARPTGAAPAPDLVVADIHSLHCGGGPKSRAKGSPGPPPPVARATRKGPGPSGLLPESWKPGMGGDPRGVGAGDMASAGPEGSVPCYPPPAPGEFPEAHSLHLSLLGVNYPLSPGLFSYLGPSLAAAAHVPFLASASPLLPPATAFPAVQPPQRPTPAPRLYYPLLLEHTLGLPAGKAALAKAPVSPRSPSGTPAPGLLKVPVPGLGPWPRVTPRDPGQEGELERAAQSDPRRRLSLGSRLELPKASPSLTRFCSRSSLPTGSSVMLWPEDGDPGGPETPGPEGPLPLQPRGPVPGSPEHVGEDLTRALGDYARVEQRLGQLGPAGGLAPRPLREQLGKIRLELLTIHQALEQAVRPPDAPLDLSVKRAPAKGPQALGEAWGRPELGPVLTGGTPEPPGMLGPAAPQPFSGHTTKCEADSSVPPPGLPLAAPDDPVIPGSGWGTCVATRSSQTPEAVCGLQSPQGAEV</sequence>
<feature type="chain" id="PRO_0000326184" description="Proline-rich protein 35">
    <location>
        <begin position="1"/>
        <end position="571"/>
    </location>
</feature>
<feature type="region of interest" description="Disordered" evidence="1">
    <location>
        <begin position="1"/>
        <end position="27"/>
    </location>
</feature>
<feature type="region of interest" description="Disordered" evidence="1">
    <location>
        <begin position="79"/>
        <end position="187"/>
    </location>
</feature>
<feature type="region of interest" description="Disordered" evidence="1">
    <location>
        <begin position="286"/>
        <end position="402"/>
    </location>
</feature>
<feature type="region of interest" description="Disordered" evidence="1">
    <location>
        <begin position="476"/>
        <end position="571"/>
    </location>
</feature>
<feature type="compositionally biased region" description="Basic residues" evidence="1">
    <location>
        <begin position="16"/>
        <end position="26"/>
    </location>
</feature>
<feature type="compositionally biased region" description="Gly residues" evidence="1">
    <location>
        <begin position="165"/>
        <end position="175"/>
    </location>
</feature>
<feature type="compositionally biased region" description="Basic and acidic residues" evidence="1">
    <location>
        <begin position="316"/>
        <end position="336"/>
    </location>
</feature>
<feature type="compositionally biased region" description="Polar residues" evidence="1">
    <location>
        <begin position="351"/>
        <end position="367"/>
    </location>
</feature>
<feature type="compositionally biased region" description="Pro residues" evidence="1">
    <location>
        <begin position="380"/>
        <end position="399"/>
    </location>
</feature>
<gene>
    <name type="primary">PRR35</name>
    <name type="synonym">C16orf11</name>
</gene>
<dbReference type="EMBL" id="AE006464">
    <property type="protein sequence ID" value="AAK61234.1"/>
    <property type="status" value="ALT_SEQ"/>
    <property type="molecule type" value="Genomic_DNA"/>
</dbReference>
<dbReference type="EMBL" id="Z97986">
    <property type="status" value="NOT_ANNOTATED_CDS"/>
    <property type="molecule type" value="Genomic_DNA"/>
</dbReference>
<dbReference type="EMBL" id="CH471112">
    <property type="protein sequence ID" value="EAW85802.1"/>
    <property type="molecule type" value="Genomic_DNA"/>
</dbReference>
<dbReference type="EMBL" id="BC016613">
    <property type="protein sequence ID" value="AAH16613.1"/>
    <property type="molecule type" value="mRNA"/>
</dbReference>
<dbReference type="CCDS" id="CCDS45365.1"/>
<dbReference type="RefSeq" id="NP_660313.1">
    <property type="nucleotide sequence ID" value="NM_145270.3"/>
</dbReference>
<dbReference type="RefSeq" id="XP_016878448.1">
    <property type="nucleotide sequence ID" value="XM_017022959.3"/>
</dbReference>
<dbReference type="RefSeq" id="XP_016878449.1">
    <property type="nucleotide sequence ID" value="XM_017022960.3"/>
</dbReference>
<dbReference type="RefSeq" id="XP_054235637.1">
    <property type="nucleotide sequence ID" value="XM_054379662.1"/>
</dbReference>
<dbReference type="RefSeq" id="XP_054235638.1">
    <property type="nucleotide sequence ID" value="XM_054379663.1"/>
</dbReference>
<dbReference type="SMR" id="P0CG20"/>
<dbReference type="BioGRID" id="126978">
    <property type="interactions" value="82"/>
</dbReference>
<dbReference type="FunCoup" id="P0CG20">
    <property type="interactions" value="29"/>
</dbReference>
<dbReference type="IntAct" id="P0CG20">
    <property type="interactions" value="72"/>
</dbReference>
<dbReference type="STRING" id="9606.ENSP00000386499"/>
<dbReference type="GlyGen" id="P0CG20">
    <property type="glycosylation" value="3 sites"/>
</dbReference>
<dbReference type="iPTMnet" id="P0CG20"/>
<dbReference type="PhosphoSitePlus" id="P0CG20"/>
<dbReference type="BioMuta" id="PRR35"/>
<dbReference type="DMDM" id="298351619"/>
<dbReference type="jPOST" id="P0CG20"/>
<dbReference type="MassIVE" id="P0CG20"/>
<dbReference type="PaxDb" id="9606-ENSP00000386499"/>
<dbReference type="PeptideAtlas" id="P0CG20"/>
<dbReference type="Antibodypedia" id="68294">
    <property type="antibodies" value="6 antibodies from 6 providers"/>
</dbReference>
<dbReference type="DNASU" id="146325"/>
<dbReference type="Ensembl" id="ENST00000409413.4">
    <property type="protein sequence ID" value="ENSP00000386499.3"/>
    <property type="gene ID" value="ENSG00000161992.6"/>
</dbReference>
<dbReference type="GeneID" id="146325"/>
<dbReference type="KEGG" id="hsa:146325"/>
<dbReference type="MANE-Select" id="ENST00000409413.4">
    <property type="protein sequence ID" value="ENSP00000386499.3"/>
    <property type="RefSeq nucleotide sequence ID" value="NM_145270.3"/>
    <property type="RefSeq protein sequence ID" value="NP_660313.1"/>
</dbReference>
<dbReference type="UCSC" id="uc002chk.4">
    <property type="organism name" value="human"/>
</dbReference>
<dbReference type="AGR" id="HGNC:14139"/>
<dbReference type="CTD" id="146325"/>
<dbReference type="DisGeNET" id="146325"/>
<dbReference type="GeneCards" id="PRR35"/>
<dbReference type="HGNC" id="HGNC:14139">
    <property type="gene designation" value="PRR35"/>
</dbReference>
<dbReference type="HPA" id="ENSG00000161992">
    <property type="expression patterns" value="Tissue enriched (brain)"/>
</dbReference>
<dbReference type="neXtProt" id="NX_P0CG20"/>
<dbReference type="OpenTargets" id="ENSG00000161992"/>
<dbReference type="PharmGKB" id="PA25524"/>
<dbReference type="VEuPathDB" id="HostDB:ENSG00000161992"/>
<dbReference type="eggNOG" id="ENOG502QRT7">
    <property type="taxonomic scope" value="Eukaryota"/>
</dbReference>
<dbReference type="GeneTree" id="ENSGT00530000063870"/>
<dbReference type="HOGENOM" id="CLU_022992_0_0_1"/>
<dbReference type="InParanoid" id="P0CG20"/>
<dbReference type="OMA" id="WKPGMGG"/>
<dbReference type="OrthoDB" id="9885698at2759"/>
<dbReference type="PAN-GO" id="P0CG20">
    <property type="GO annotations" value="0 GO annotations based on evolutionary models"/>
</dbReference>
<dbReference type="PhylomeDB" id="P0CG20"/>
<dbReference type="TreeFam" id="TF331381"/>
<dbReference type="PathwayCommons" id="P0CG20"/>
<dbReference type="SignaLink" id="P0CG20"/>
<dbReference type="BioGRID-ORCS" id="146325">
    <property type="hits" value="15 hits in 1127 CRISPR screens"/>
</dbReference>
<dbReference type="GenomeRNAi" id="146325"/>
<dbReference type="Pharos" id="P0CG20">
    <property type="development level" value="Tdark"/>
</dbReference>
<dbReference type="PRO" id="PR:P0CG20"/>
<dbReference type="Proteomes" id="UP000005640">
    <property type="component" value="Chromosome 16"/>
</dbReference>
<dbReference type="RNAct" id="P0CG20">
    <property type="molecule type" value="protein"/>
</dbReference>
<dbReference type="Bgee" id="ENSG00000161992">
    <property type="expression patterns" value="Expressed in cerebellar hemisphere and 34 other cell types or tissues"/>
</dbReference>
<dbReference type="InterPro" id="IPR039363">
    <property type="entry name" value="ZNF750"/>
</dbReference>
<dbReference type="InterPro" id="IPR039064">
    <property type="entry name" value="ZNF750_Znf"/>
</dbReference>
<dbReference type="PANTHER" id="PTHR14678:SF2">
    <property type="entry name" value="PROLINE-RICH PROTEIN 35"/>
    <property type="match status" value="1"/>
</dbReference>
<dbReference type="PANTHER" id="PTHR14678">
    <property type="entry name" value="PROLINE-RICH PROTEIN 35-RELATED"/>
    <property type="match status" value="1"/>
</dbReference>
<dbReference type="Pfam" id="PF15269">
    <property type="entry name" value="zf-C2H2_7"/>
    <property type="match status" value="1"/>
</dbReference>